<gene>
    <name evidence="1" type="primary">rsmH</name>
    <name type="synonym">mraW</name>
    <name type="ordered locus">Ccel_0476</name>
</gene>
<name>RSMH_RUMCH</name>
<accession>B8I6G6</accession>
<organism>
    <name type="scientific">Ruminiclostridium cellulolyticum (strain ATCC 35319 / DSM 5812 / JCM 6584 / H10)</name>
    <name type="common">Clostridium cellulolyticum</name>
    <dbReference type="NCBI Taxonomy" id="394503"/>
    <lineage>
        <taxon>Bacteria</taxon>
        <taxon>Bacillati</taxon>
        <taxon>Bacillota</taxon>
        <taxon>Clostridia</taxon>
        <taxon>Eubacteriales</taxon>
        <taxon>Oscillospiraceae</taxon>
        <taxon>Ruminiclostridium</taxon>
    </lineage>
</organism>
<comment type="function">
    <text evidence="1">Specifically methylates the N4 position of cytidine in position 1402 (C1402) of 16S rRNA.</text>
</comment>
<comment type="catalytic activity">
    <reaction evidence="1">
        <text>cytidine(1402) in 16S rRNA + S-adenosyl-L-methionine = N(4)-methylcytidine(1402) in 16S rRNA + S-adenosyl-L-homocysteine + H(+)</text>
        <dbReference type="Rhea" id="RHEA:42928"/>
        <dbReference type="Rhea" id="RHEA-COMP:10286"/>
        <dbReference type="Rhea" id="RHEA-COMP:10287"/>
        <dbReference type="ChEBI" id="CHEBI:15378"/>
        <dbReference type="ChEBI" id="CHEBI:57856"/>
        <dbReference type="ChEBI" id="CHEBI:59789"/>
        <dbReference type="ChEBI" id="CHEBI:74506"/>
        <dbReference type="ChEBI" id="CHEBI:82748"/>
        <dbReference type="EC" id="2.1.1.199"/>
    </reaction>
</comment>
<comment type="subcellular location">
    <subcellularLocation>
        <location evidence="1">Cytoplasm</location>
    </subcellularLocation>
</comment>
<comment type="similarity">
    <text evidence="1">Belongs to the methyltransferase superfamily. RsmH family.</text>
</comment>
<feature type="chain" id="PRO_0000386819" description="Ribosomal RNA small subunit methyltransferase H">
    <location>
        <begin position="1"/>
        <end position="313"/>
    </location>
</feature>
<feature type="binding site" evidence="1">
    <location>
        <begin position="33"/>
        <end position="35"/>
    </location>
    <ligand>
        <name>S-adenosyl-L-methionine</name>
        <dbReference type="ChEBI" id="CHEBI:59789"/>
    </ligand>
</feature>
<feature type="binding site" evidence="1">
    <location>
        <position position="53"/>
    </location>
    <ligand>
        <name>S-adenosyl-L-methionine</name>
        <dbReference type="ChEBI" id="CHEBI:59789"/>
    </ligand>
</feature>
<feature type="binding site" evidence="1">
    <location>
        <position position="82"/>
    </location>
    <ligand>
        <name>S-adenosyl-L-methionine</name>
        <dbReference type="ChEBI" id="CHEBI:59789"/>
    </ligand>
</feature>
<feature type="binding site" evidence="1">
    <location>
        <position position="103"/>
    </location>
    <ligand>
        <name>S-adenosyl-L-methionine</name>
        <dbReference type="ChEBI" id="CHEBI:59789"/>
    </ligand>
</feature>
<feature type="binding site" evidence="1">
    <location>
        <position position="110"/>
    </location>
    <ligand>
        <name>S-adenosyl-L-methionine</name>
        <dbReference type="ChEBI" id="CHEBI:59789"/>
    </ligand>
</feature>
<protein>
    <recommendedName>
        <fullName evidence="1">Ribosomal RNA small subunit methyltransferase H</fullName>
        <ecNumber evidence="1">2.1.1.199</ecNumber>
    </recommendedName>
    <alternativeName>
        <fullName evidence="1">16S rRNA m(4)C1402 methyltransferase</fullName>
    </alternativeName>
    <alternativeName>
        <fullName evidence="1">rRNA (cytosine-N(4)-)-methyltransferase RsmH</fullName>
    </alternativeName>
</protein>
<reference key="1">
    <citation type="submission" date="2009-01" db="EMBL/GenBank/DDBJ databases">
        <title>Complete sequence of Clostridium cellulolyticum H10.</title>
        <authorList>
            <consortium name="US DOE Joint Genome Institute"/>
            <person name="Lucas S."/>
            <person name="Copeland A."/>
            <person name="Lapidus A."/>
            <person name="Glavina del Rio T."/>
            <person name="Dalin E."/>
            <person name="Tice H."/>
            <person name="Bruce D."/>
            <person name="Goodwin L."/>
            <person name="Pitluck S."/>
            <person name="Chertkov O."/>
            <person name="Saunders E."/>
            <person name="Brettin T."/>
            <person name="Detter J.C."/>
            <person name="Han C."/>
            <person name="Larimer F."/>
            <person name="Land M."/>
            <person name="Hauser L."/>
            <person name="Kyrpides N."/>
            <person name="Ivanova N."/>
            <person name="Zhou J."/>
            <person name="Richardson P."/>
        </authorList>
    </citation>
    <scope>NUCLEOTIDE SEQUENCE [LARGE SCALE GENOMIC DNA]</scope>
    <source>
        <strain>ATCC 35319 / DSM 5812 / JCM 6584 / H10</strain>
    </source>
</reference>
<proteinExistence type="inferred from homology"/>
<keyword id="KW-0963">Cytoplasm</keyword>
<keyword id="KW-0489">Methyltransferase</keyword>
<keyword id="KW-1185">Reference proteome</keyword>
<keyword id="KW-0698">rRNA processing</keyword>
<keyword id="KW-0949">S-adenosyl-L-methionine</keyword>
<keyword id="KW-0808">Transferase</keyword>
<dbReference type="EC" id="2.1.1.199" evidence="1"/>
<dbReference type="EMBL" id="CP001348">
    <property type="protein sequence ID" value="ACL74858.1"/>
    <property type="molecule type" value="Genomic_DNA"/>
</dbReference>
<dbReference type="RefSeq" id="WP_012634920.1">
    <property type="nucleotide sequence ID" value="NC_011898.1"/>
</dbReference>
<dbReference type="SMR" id="B8I6G6"/>
<dbReference type="STRING" id="394503.Ccel_0476"/>
<dbReference type="KEGG" id="cce:Ccel_0476"/>
<dbReference type="eggNOG" id="COG0275">
    <property type="taxonomic scope" value="Bacteria"/>
</dbReference>
<dbReference type="HOGENOM" id="CLU_038422_2_0_9"/>
<dbReference type="OrthoDB" id="9806637at2"/>
<dbReference type="Proteomes" id="UP000001349">
    <property type="component" value="Chromosome"/>
</dbReference>
<dbReference type="GO" id="GO:0005737">
    <property type="term" value="C:cytoplasm"/>
    <property type="evidence" value="ECO:0007669"/>
    <property type="project" value="UniProtKB-SubCell"/>
</dbReference>
<dbReference type="GO" id="GO:0071424">
    <property type="term" value="F:rRNA (cytosine-N4-)-methyltransferase activity"/>
    <property type="evidence" value="ECO:0007669"/>
    <property type="project" value="UniProtKB-UniRule"/>
</dbReference>
<dbReference type="GO" id="GO:0070475">
    <property type="term" value="P:rRNA base methylation"/>
    <property type="evidence" value="ECO:0007669"/>
    <property type="project" value="UniProtKB-UniRule"/>
</dbReference>
<dbReference type="FunFam" id="1.10.150.170:FF:000001">
    <property type="entry name" value="Ribosomal RNA small subunit methyltransferase H"/>
    <property type="match status" value="1"/>
</dbReference>
<dbReference type="Gene3D" id="1.10.150.170">
    <property type="entry name" value="Putative methyltransferase TM0872, insert domain"/>
    <property type="match status" value="1"/>
</dbReference>
<dbReference type="Gene3D" id="3.40.50.150">
    <property type="entry name" value="Vaccinia Virus protein VP39"/>
    <property type="match status" value="1"/>
</dbReference>
<dbReference type="HAMAP" id="MF_01007">
    <property type="entry name" value="16SrRNA_methyltr_H"/>
    <property type="match status" value="1"/>
</dbReference>
<dbReference type="InterPro" id="IPR002903">
    <property type="entry name" value="RsmH"/>
</dbReference>
<dbReference type="InterPro" id="IPR023397">
    <property type="entry name" value="SAM-dep_MeTrfase_MraW_recog"/>
</dbReference>
<dbReference type="InterPro" id="IPR029063">
    <property type="entry name" value="SAM-dependent_MTases_sf"/>
</dbReference>
<dbReference type="NCBIfam" id="TIGR00006">
    <property type="entry name" value="16S rRNA (cytosine(1402)-N(4))-methyltransferase RsmH"/>
    <property type="match status" value="1"/>
</dbReference>
<dbReference type="PANTHER" id="PTHR11265:SF0">
    <property type="entry name" value="12S RRNA N4-METHYLCYTIDINE METHYLTRANSFERASE"/>
    <property type="match status" value="1"/>
</dbReference>
<dbReference type="PANTHER" id="PTHR11265">
    <property type="entry name" value="S-ADENOSYL-METHYLTRANSFERASE MRAW"/>
    <property type="match status" value="1"/>
</dbReference>
<dbReference type="Pfam" id="PF01795">
    <property type="entry name" value="Methyltransf_5"/>
    <property type="match status" value="1"/>
</dbReference>
<dbReference type="PIRSF" id="PIRSF004486">
    <property type="entry name" value="MraW"/>
    <property type="match status" value="1"/>
</dbReference>
<dbReference type="SUPFAM" id="SSF81799">
    <property type="entry name" value="Putative methyltransferase TM0872, insert domain"/>
    <property type="match status" value="1"/>
</dbReference>
<dbReference type="SUPFAM" id="SSF53335">
    <property type="entry name" value="S-adenosyl-L-methionine-dependent methyltransferases"/>
    <property type="match status" value="1"/>
</dbReference>
<sequence length="313" mass="35166">MEFKHTSVLLDECIEYLNINQEGIYVDGTIGGAGHSSEIYKRLGEKGCLVGLDQDSFAVETSIKRLDEIKSNADFKVVNTNFKNIKSACSGLGINEVDGILLDLGVSSHQLDEASRGFSYQHDAPLDMRMNTKSELSAYDVVNKYSEQDIYRIIRDFGEEKWASRIAKFITEARQNEPVETTYDLVDIIKKAVPSSARRDGPHPAKRTFQAIRIEVNNELGILNKTIEDCVDLLKRGGRLCIITFHSLEDRIVKMQYNKMVNPCTCPPAFPVCACGKKPKAVLINKKPIVSDIRELDKNPRARSAKLRVLQKI</sequence>
<evidence type="ECO:0000255" key="1">
    <source>
        <dbReference type="HAMAP-Rule" id="MF_01007"/>
    </source>
</evidence>